<proteinExistence type="inferred from homology"/>
<feature type="chain" id="PRO_0000373631" description="Uncharacterized protein E301R">
    <location>
        <begin position="1"/>
        <end position="301"/>
    </location>
</feature>
<organismHost>
    <name type="scientific">Ornithodoros</name>
    <name type="common">relapsing fever ticks</name>
    <dbReference type="NCBI Taxonomy" id="6937"/>
</organismHost>
<organismHost>
    <name type="scientific">Phacochoerus aethiopicus</name>
    <name type="common">Warthog</name>
    <dbReference type="NCBI Taxonomy" id="85517"/>
</organismHost>
<organismHost>
    <name type="scientific">Phacochoerus africanus</name>
    <name type="common">Warthog</name>
    <dbReference type="NCBI Taxonomy" id="41426"/>
</organismHost>
<organismHost>
    <name type="scientific">Potamochoerus larvatus</name>
    <name type="common">Bushpig</name>
    <dbReference type="NCBI Taxonomy" id="273792"/>
</organismHost>
<organismHost>
    <name type="scientific">Sus scrofa</name>
    <name type="common">Pig</name>
    <dbReference type="NCBI Taxonomy" id="9823"/>
</organismHost>
<gene>
    <name type="ordered locus">Mal-136</name>
    <name type="ORF">j15R</name>
</gene>
<name>VF301_ASFM2</name>
<comment type="function">
    <text evidence="1">Plays a role in the inhibition of host innate immune system by acting as a negatively regulator of type I interferon production. Mechanistically, interacts with and prevents host IRF3 nuclear localization to inhibit its transcriptional activity.</text>
</comment>
<comment type="subunit">
    <text evidence="1">Interacts with host IRF3.</text>
</comment>
<comment type="induction">
    <text evidence="2">Expressed in the late phase of the viral replicative cycle.</text>
</comment>
<comment type="similarity">
    <text evidence="2">Belongs to the asfivirus E301R family.</text>
</comment>
<comment type="sequence caution" evidence="2">
    <conflict type="frameshift">
        <sequence resource="EMBL-CDS" id="CAA50835"/>
    </conflict>
</comment>
<keyword id="KW-0945">Host-virus interaction</keyword>
<keyword id="KW-1090">Inhibition of host innate immune response by virus</keyword>
<keyword id="KW-1092">Inhibition of host IRF3 by virus</keyword>
<keyword id="KW-1113">Inhibition of host RLR pathway by virus</keyword>
<keyword id="KW-0426">Late protein</keyword>
<keyword id="KW-0899">Viral immunoevasion</keyword>
<protein>
    <recommendedName>
        <fullName>Uncharacterized protein E301R</fullName>
    </recommendedName>
</protein>
<sequence>MSEDIRRGPGRPPKKRVVPNFERKGILEKPVRPQSRLEFSYDNPLIFKNLFIYFKNLKSKNILVRCTPTEITFFSRDQSQASFVIATIDGKNVNHYYASDVFWLGINRELVEKMFNSIDRSFLKITIVHRYDKPETLYFIFTDFDIDKECTYQITVSEPELDMDLIEMEKSISEERLKNYPLRWEFTSKQLKKTFSDLSNYTELVTIEKLGGDTPLHLYFQKFNSISYHEMYKSSNKINLTSTIPKSQVFQINVKIAHIKSLASAMVTDKIRILCEENGNLIFQSEMDALMLNTITMNNMI</sequence>
<organism>
    <name type="scientific">African swine fever virus (isolate Tick/Malawi/Lil 20-1/1983)</name>
    <name type="common">ASFV</name>
    <dbReference type="NCBI Taxonomy" id="10500"/>
    <lineage>
        <taxon>Viruses</taxon>
        <taxon>Varidnaviria</taxon>
        <taxon>Bamfordvirae</taxon>
        <taxon>Nucleocytoviricota</taxon>
        <taxon>Pokkesviricetes</taxon>
        <taxon>Asfuvirales</taxon>
        <taxon>Asfarviridae</taxon>
        <taxon>Asfivirus</taxon>
        <taxon>African swine fever virus</taxon>
    </lineage>
</organism>
<accession>Q65239</accession>
<evidence type="ECO:0000250" key="1">
    <source>
        <dbReference type="UniProtKB" id="Q65196"/>
    </source>
</evidence>
<evidence type="ECO:0000305" key="2"/>
<dbReference type="EMBL" id="X71982">
    <property type="protein sequence ID" value="CAA50835.1"/>
    <property type="status" value="ALT_FRAME"/>
    <property type="molecule type" value="Genomic_DNA"/>
</dbReference>
<dbReference type="EMBL" id="AY261361">
    <property type="status" value="NOT_ANNOTATED_CDS"/>
    <property type="molecule type" value="Genomic_DNA"/>
</dbReference>
<dbReference type="SMR" id="Q65239"/>
<dbReference type="Proteomes" id="UP000000860">
    <property type="component" value="Segment"/>
</dbReference>
<dbReference type="GO" id="GO:0039548">
    <property type="term" value="P:symbiont-mediated suppression of host cytoplasmic pattern recognition receptor signaling pathway via inhibition of IRF3 activity"/>
    <property type="evidence" value="ECO:0007669"/>
    <property type="project" value="UniProtKB-KW"/>
</dbReference>
<dbReference type="Gene3D" id="3.70.10.10">
    <property type="match status" value="1"/>
</dbReference>
<dbReference type="InterPro" id="IPR046938">
    <property type="entry name" value="DNA_clamp_sf"/>
</dbReference>
<dbReference type="SUPFAM" id="SSF55979">
    <property type="entry name" value="DNA clamp"/>
    <property type="match status" value="1"/>
</dbReference>
<reference key="1">
    <citation type="journal article" date="1994" name="J. Gen. Virol.">
        <title>Nucleotide sequence of a 55 kbp region from the right end of the genome of a pathogenic African swine fever virus isolate (Malawi LIL20/1).</title>
        <authorList>
            <person name="Dixon L.K."/>
            <person name="Twigg S.R.F."/>
            <person name="Baylis S.A."/>
            <person name="Vydelingum S."/>
            <person name="Bristow C."/>
            <person name="Hammond J.M."/>
            <person name="Smith G.L."/>
        </authorList>
    </citation>
    <scope>NUCLEOTIDE SEQUENCE [GENOMIC DNA]</scope>
</reference>
<reference key="2">
    <citation type="submission" date="2003-03" db="EMBL/GenBank/DDBJ databases">
        <title>African swine fever virus genomes.</title>
        <authorList>
            <person name="Kutish G.F."/>
            <person name="Rock D.L."/>
        </authorList>
    </citation>
    <scope>NUCLEOTIDE SEQUENCE [LARGE SCALE GENOMIC DNA]</scope>
</reference>